<name>MSRA_METTH</name>
<proteinExistence type="inferred from homology"/>
<reference key="1">
    <citation type="journal article" date="1997" name="J. Bacteriol.">
        <title>Complete genome sequence of Methanobacterium thermoautotrophicum deltaH: functional analysis and comparative genomics.</title>
        <authorList>
            <person name="Smith D.R."/>
            <person name="Doucette-Stamm L.A."/>
            <person name="Deloughery C."/>
            <person name="Lee H.-M."/>
            <person name="Dubois J."/>
            <person name="Aldredge T."/>
            <person name="Bashirzadeh R."/>
            <person name="Blakely D."/>
            <person name="Cook R."/>
            <person name="Gilbert K."/>
            <person name="Harrison D."/>
            <person name="Hoang L."/>
            <person name="Keagle P."/>
            <person name="Lumm W."/>
            <person name="Pothier B."/>
            <person name="Qiu D."/>
            <person name="Spadafora R."/>
            <person name="Vicare R."/>
            <person name="Wang Y."/>
            <person name="Wierzbowski J."/>
            <person name="Gibson R."/>
            <person name="Jiwani N."/>
            <person name="Caruso A."/>
            <person name="Bush D."/>
            <person name="Safer H."/>
            <person name="Patwell D."/>
            <person name="Prabhakar S."/>
            <person name="McDougall S."/>
            <person name="Shimer G."/>
            <person name="Goyal A."/>
            <person name="Pietrovski S."/>
            <person name="Church G.M."/>
            <person name="Daniels C.J."/>
            <person name="Mao J.-I."/>
            <person name="Rice P."/>
            <person name="Noelling J."/>
            <person name="Reeve J.N."/>
        </authorList>
    </citation>
    <scope>NUCLEOTIDE SEQUENCE [LARGE SCALE GENOMIC DNA]</scope>
    <source>
        <strain>ATCC 29096 / DSM 1053 / JCM 10044 / NBRC 100330 / Delta H</strain>
    </source>
</reference>
<comment type="function">
    <text evidence="1">Has an important function as a repair enzyme for proteins that have been inactivated by oxidation. Catalyzes the reversible oxidation-reduction of methionine sulfoxide in proteins to methionine (By similarity).</text>
</comment>
<comment type="catalytic activity">
    <reaction>
        <text>L-methionyl-[protein] + [thioredoxin]-disulfide + H2O = L-methionyl-(S)-S-oxide-[protein] + [thioredoxin]-dithiol</text>
        <dbReference type="Rhea" id="RHEA:14217"/>
        <dbReference type="Rhea" id="RHEA-COMP:10698"/>
        <dbReference type="Rhea" id="RHEA-COMP:10700"/>
        <dbReference type="Rhea" id="RHEA-COMP:12313"/>
        <dbReference type="Rhea" id="RHEA-COMP:12315"/>
        <dbReference type="ChEBI" id="CHEBI:15377"/>
        <dbReference type="ChEBI" id="CHEBI:16044"/>
        <dbReference type="ChEBI" id="CHEBI:29950"/>
        <dbReference type="ChEBI" id="CHEBI:44120"/>
        <dbReference type="ChEBI" id="CHEBI:50058"/>
        <dbReference type="EC" id="1.8.4.11"/>
    </reaction>
</comment>
<comment type="catalytic activity">
    <reaction>
        <text>[thioredoxin]-disulfide + L-methionine + H2O = L-methionine (S)-S-oxide + [thioredoxin]-dithiol</text>
        <dbReference type="Rhea" id="RHEA:19993"/>
        <dbReference type="Rhea" id="RHEA-COMP:10698"/>
        <dbReference type="Rhea" id="RHEA-COMP:10700"/>
        <dbReference type="ChEBI" id="CHEBI:15377"/>
        <dbReference type="ChEBI" id="CHEBI:29950"/>
        <dbReference type="ChEBI" id="CHEBI:50058"/>
        <dbReference type="ChEBI" id="CHEBI:57844"/>
        <dbReference type="ChEBI" id="CHEBI:58772"/>
        <dbReference type="EC" id="1.8.4.11"/>
    </reaction>
</comment>
<comment type="similarity">
    <text evidence="2">Belongs to the MsrA Met sulfoxide reductase family.</text>
</comment>
<gene>
    <name type="primary">msrA</name>
    <name type="ordered locus">MTH_535</name>
</gene>
<evidence type="ECO:0000250" key="1"/>
<evidence type="ECO:0000305" key="2"/>
<feature type="chain" id="PRO_0000138621" description="Peptide methionine sulfoxide reductase MsrA">
    <location>
        <begin position="1"/>
        <end position="169"/>
    </location>
</feature>
<feature type="active site" evidence="1">
    <location>
        <position position="16"/>
    </location>
</feature>
<organism>
    <name type="scientific">Methanothermobacter thermautotrophicus (strain ATCC 29096 / DSM 1053 / JCM 10044 / NBRC 100330 / Delta H)</name>
    <name type="common">Methanobacterium thermoautotrophicum</name>
    <dbReference type="NCBI Taxonomy" id="187420"/>
    <lineage>
        <taxon>Archaea</taxon>
        <taxon>Methanobacteriati</taxon>
        <taxon>Methanobacteriota</taxon>
        <taxon>Methanomada group</taxon>
        <taxon>Methanobacteria</taxon>
        <taxon>Methanobacteriales</taxon>
        <taxon>Methanobacteriaceae</taxon>
        <taxon>Methanothermobacter</taxon>
    </lineage>
</organism>
<accession>O26635</accession>
<protein>
    <recommendedName>
        <fullName>Peptide methionine sulfoxide reductase MsrA</fullName>
        <shortName>Protein-methionine-S-oxide reductase</shortName>
        <ecNumber>1.8.4.11</ecNumber>
    </recommendedName>
    <alternativeName>
        <fullName>Peptide-methionine (S)-S-oxide reductase</fullName>
        <shortName>Peptide Met(O) reductase</shortName>
    </alternativeName>
</protein>
<sequence length="169" mass="19548">MMCLSRYEKATFGAGCFWGVEDAFRKVDGVVSTRVGYMGGHLENPTYEDVCTGLTGHAEVVEVTFDPDVVGYSDLLDVFWSIHDPTTLNRQGPDVGEQYRSVIFYHSDEQRRAAIESRRRLEESGRFRDRIVTAIEPAGTFYEAEEYHQQYLEKNPRRRCYLMRLLSTR</sequence>
<keyword id="KW-0560">Oxidoreductase</keyword>
<keyword id="KW-1185">Reference proteome</keyword>
<dbReference type="EC" id="1.8.4.11"/>
<dbReference type="EMBL" id="AE000666">
    <property type="protein sequence ID" value="AAB85041.1"/>
    <property type="molecule type" value="Genomic_DNA"/>
</dbReference>
<dbReference type="PIR" id="F69170">
    <property type="entry name" value="F69170"/>
</dbReference>
<dbReference type="SMR" id="O26635"/>
<dbReference type="STRING" id="187420.MTH_535"/>
<dbReference type="PaxDb" id="187420-MTH_535"/>
<dbReference type="EnsemblBacteria" id="AAB85041">
    <property type="protein sequence ID" value="AAB85041"/>
    <property type="gene ID" value="MTH_535"/>
</dbReference>
<dbReference type="KEGG" id="mth:MTH_535"/>
<dbReference type="PATRIC" id="fig|187420.15.peg.514"/>
<dbReference type="HOGENOM" id="CLU_031040_10_0_2"/>
<dbReference type="InParanoid" id="O26635"/>
<dbReference type="Proteomes" id="UP000005223">
    <property type="component" value="Chromosome"/>
</dbReference>
<dbReference type="GO" id="GO:0033744">
    <property type="term" value="F:L-methionine:thioredoxin-disulfide S-oxidoreductase activity"/>
    <property type="evidence" value="ECO:0007669"/>
    <property type="project" value="RHEA"/>
</dbReference>
<dbReference type="GO" id="GO:0008113">
    <property type="term" value="F:peptide-methionine (S)-S-oxide reductase activity"/>
    <property type="evidence" value="ECO:0007669"/>
    <property type="project" value="UniProtKB-UniRule"/>
</dbReference>
<dbReference type="GO" id="GO:0036211">
    <property type="term" value="P:protein modification process"/>
    <property type="evidence" value="ECO:0007669"/>
    <property type="project" value="UniProtKB-UniRule"/>
</dbReference>
<dbReference type="Gene3D" id="3.30.1060.10">
    <property type="entry name" value="Peptide methionine sulphoxide reductase MsrA"/>
    <property type="match status" value="1"/>
</dbReference>
<dbReference type="HAMAP" id="MF_01401">
    <property type="entry name" value="MsrA"/>
    <property type="match status" value="1"/>
</dbReference>
<dbReference type="InterPro" id="IPR002569">
    <property type="entry name" value="Met_Sox_Rdtase_MsrA_dom"/>
</dbReference>
<dbReference type="InterPro" id="IPR036509">
    <property type="entry name" value="Met_Sox_Rdtase_MsrA_sf"/>
</dbReference>
<dbReference type="NCBIfam" id="TIGR00401">
    <property type="entry name" value="msrA"/>
    <property type="match status" value="1"/>
</dbReference>
<dbReference type="PANTHER" id="PTHR43774">
    <property type="entry name" value="PEPTIDE METHIONINE SULFOXIDE REDUCTASE"/>
    <property type="match status" value="1"/>
</dbReference>
<dbReference type="PANTHER" id="PTHR43774:SF1">
    <property type="entry name" value="PEPTIDE METHIONINE SULFOXIDE REDUCTASE MSRA 2"/>
    <property type="match status" value="1"/>
</dbReference>
<dbReference type="Pfam" id="PF01625">
    <property type="entry name" value="PMSR"/>
    <property type="match status" value="1"/>
</dbReference>
<dbReference type="SUPFAM" id="SSF55068">
    <property type="entry name" value="Peptide methionine sulfoxide reductase"/>
    <property type="match status" value="1"/>
</dbReference>